<accession>Q3ATV8</accession>
<sequence>MTHHDAQPSTDAEQSSNATLPHILICNDDGIEADGIHALATAMKKVGRVTVVAPAEPHSAMSHAMTLGRPLRIKEYQKNGRFFGYTVSGTPVDCIKVALSHILTEKPDILVSGINYGSNTATNTLYSGTVAAALEGAIQGITSLAFSLATYENADFTYATKFARKLTKKVLAEGLPADTILSVNIPNVPESQIAGVIIAEQGSSRWEEQAIERHDMFGNPYYWLSGSLQLMDHSMKKDEFAVRHNYVAVTPISCDLTNYAALAGLEKWKLKK</sequence>
<name>SURE_CHLCH</name>
<dbReference type="EC" id="3.1.3.5" evidence="1"/>
<dbReference type="EMBL" id="CP000108">
    <property type="protein sequence ID" value="ABB27567.1"/>
    <property type="molecule type" value="Genomic_DNA"/>
</dbReference>
<dbReference type="SMR" id="Q3ATV8"/>
<dbReference type="STRING" id="340177.Cag_0291"/>
<dbReference type="KEGG" id="cch:Cag_0291"/>
<dbReference type="eggNOG" id="COG0496">
    <property type="taxonomic scope" value="Bacteria"/>
</dbReference>
<dbReference type="HOGENOM" id="CLU_045192_1_0_10"/>
<dbReference type="OrthoDB" id="9780815at2"/>
<dbReference type="GO" id="GO:0005737">
    <property type="term" value="C:cytoplasm"/>
    <property type="evidence" value="ECO:0007669"/>
    <property type="project" value="UniProtKB-SubCell"/>
</dbReference>
<dbReference type="GO" id="GO:0008254">
    <property type="term" value="F:3'-nucleotidase activity"/>
    <property type="evidence" value="ECO:0007669"/>
    <property type="project" value="TreeGrafter"/>
</dbReference>
<dbReference type="GO" id="GO:0008253">
    <property type="term" value="F:5'-nucleotidase activity"/>
    <property type="evidence" value="ECO:0007669"/>
    <property type="project" value="UniProtKB-UniRule"/>
</dbReference>
<dbReference type="GO" id="GO:0004309">
    <property type="term" value="F:exopolyphosphatase activity"/>
    <property type="evidence" value="ECO:0007669"/>
    <property type="project" value="TreeGrafter"/>
</dbReference>
<dbReference type="GO" id="GO:0046872">
    <property type="term" value="F:metal ion binding"/>
    <property type="evidence" value="ECO:0007669"/>
    <property type="project" value="UniProtKB-UniRule"/>
</dbReference>
<dbReference type="GO" id="GO:0000166">
    <property type="term" value="F:nucleotide binding"/>
    <property type="evidence" value="ECO:0007669"/>
    <property type="project" value="UniProtKB-KW"/>
</dbReference>
<dbReference type="FunFam" id="3.40.1210.10:FF:000001">
    <property type="entry name" value="5'/3'-nucleotidase SurE"/>
    <property type="match status" value="1"/>
</dbReference>
<dbReference type="Gene3D" id="3.40.1210.10">
    <property type="entry name" value="Survival protein SurE-like phosphatase/nucleotidase"/>
    <property type="match status" value="1"/>
</dbReference>
<dbReference type="HAMAP" id="MF_00060">
    <property type="entry name" value="SurE"/>
    <property type="match status" value="1"/>
</dbReference>
<dbReference type="InterPro" id="IPR030048">
    <property type="entry name" value="SurE"/>
</dbReference>
<dbReference type="InterPro" id="IPR002828">
    <property type="entry name" value="SurE-like_Pase/nucleotidase"/>
</dbReference>
<dbReference type="InterPro" id="IPR036523">
    <property type="entry name" value="SurE-like_sf"/>
</dbReference>
<dbReference type="NCBIfam" id="NF001490">
    <property type="entry name" value="PRK00346.1-4"/>
    <property type="match status" value="1"/>
</dbReference>
<dbReference type="NCBIfam" id="NF001492">
    <property type="entry name" value="PRK00346.2-2"/>
    <property type="match status" value="1"/>
</dbReference>
<dbReference type="NCBIfam" id="NF010542">
    <property type="entry name" value="PRK13932.1"/>
    <property type="match status" value="1"/>
</dbReference>
<dbReference type="NCBIfam" id="TIGR00087">
    <property type="entry name" value="surE"/>
    <property type="match status" value="1"/>
</dbReference>
<dbReference type="PANTHER" id="PTHR30457">
    <property type="entry name" value="5'-NUCLEOTIDASE SURE"/>
    <property type="match status" value="1"/>
</dbReference>
<dbReference type="PANTHER" id="PTHR30457:SF12">
    <property type="entry name" value="5'_3'-NUCLEOTIDASE SURE"/>
    <property type="match status" value="1"/>
</dbReference>
<dbReference type="Pfam" id="PF01975">
    <property type="entry name" value="SurE"/>
    <property type="match status" value="1"/>
</dbReference>
<dbReference type="SUPFAM" id="SSF64167">
    <property type="entry name" value="SurE-like"/>
    <property type="match status" value="1"/>
</dbReference>
<reference key="1">
    <citation type="submission" date="2005-08" db="EMBL/GenBank/DDBJ databases">
        <title>Complete sequence of Chlorobium chlorochromatii CaD3.</title>
        <authorList>
            <consortium name="US DOE Joint Genome Institute"/>
            <person name="Copeland A."/>
            <person name="Lucas S."/>
            <person name="Lapidus A."/>
            <person name="Barry K."/>
            <person name="Detter J.C."/>
            <person name="Glavina T."/>
            <person name="Hammon N."/>
            <person name="Israni S."/>
            <person name="Pitluck S."/>
            <person name="Bryant D."/>
            <person name="Schmutz J."/>
            <person name="Larimer F."/>
            <person name="Land M."/>
            <person name="Kyrpides N."/>
            <person name="Ivanova N."/>
            <person name="Richardson P."/>
        </authorList>
    </citation>
    <scope>NUCLEOTIDE SEQUENCE [LARGE SCALE GENOMIC DNA]</scope>
    <source>
        <strain>CaD3</strain>
    </source>
</reference>
<organism>
    <name type="scientific">Chlorobium chlorochromatii (strain CaD3)</name>
    <dbReference type="NCBI Taxonomy" id="340177"/>
    <lineage>
        <taxon>Bacteria</taxon>
        <taxon>Pseudomonadati</taxon>
        <taxon>Chlorobiota</taxon>
        <taxon>Chlorobiia</taxon>
        <taxon>Chlorobiales</taxon>
        <taxon>Chlorobiaceae</taxon>
        <taxon>Chlorobium/Pelodictyon group</taxon>
        <taxon>Chlorobium</taxon>
    </lineage>
</organism>
<protein>
    <recommendedName>
        <fullName evidence="1">5'-nucleotidase SurE</fullName>
        <ecNumber evidence="1">3.1.3.5</ecNumber>
    </recommendedName>
    <alternativeName>
        <fullName evidence="1">Nucleoside 5'-monophosphate phosphohydrolase</fullName>
    </alternativeName>
</protein>
<comment type="function">
    <text evidence="1">Nucleotidase that shows phosphatase activity on nucleoside 5'-monophosphates.</text>
</comment>
<comment type="catalytic activity">
    <reaction evidence="1">
        <text>a ribonucleoside 5'-phosphate + H2O = a ribonucleoside + phosphate</text>
        <dbReference type="Rhea" id="RHEA:12484"/>
        <dbReference type="ChEBI" id="CHEBI:15377"/>
        <dbReference type="ChEBI" id="CHEBI:18254"/>
        <dbReference type="ChEBI" id="CHEBI:43474"/>
        <dbReference type="ChEBI" id="CHEBI:58043"/>
        <dbReference type="EC" id="3.1.3.5"/>
    </reaction>
</comment>
<comment type="cofactor">
    <cofactor evidence="1">
        <name>a divalent metal cation</name>
        <dbReference type="ChEBI" id="CHEBI:60240"/>
    </cofactor>
    <text evidence="1">Binds 1 divalent metal cation per subunit.</text>
</comment>
<comment type="subcellular location">
    <subcellularLocation>
        <location evidence="1">Cytoplasm</location>
    </subcellularLocation>
</comment>
<comment type="similarity">
    <text evidence="1">Belongs to the SurE nucleotidase family.</text>
</comment>
<evidence type="ECO:0000255" key="1">
    <source>
        <dbReference type="HAMAP-Rule" id="MF_00060"/>
    </source>
</evidence>
<gene>
    <name evidence="1" type="primary">surE</name>
    <name type="ordered locus">Cag_0291</name>
</gene>
<feature type="chain" id="PRO_0000235606" description="5'-nucleotidase SurE">
    <location>
        <begin position="1"/>
        <end position="272"/>
    </location>
</feature>
<feature type="binding site" evidence="1">
    <location>
        <position position="28"/>
    </location>
    <ligand>
        <name>a divalent metal cation</name>
        <dbReference type="ChEBI" id="CHEBI:60240"/>
    </ligand>
</feature>
<feature type="binding site" evidence="1">
    <location>
        <position position="29"/>
    </location>
    <ligand>
        <name>a divalent metal cation</name>
        <dbReference type="ChEBI" id="CHEBI:60240"/>
    </ligand>
</feature>
<feature type="binding site" evidence="1">
    <location>
        <position position="59"/>
    </location>
    <ligand>
        <name>a divalent metal cation</name>
        <dbReference type="ChEBI" id="CHEBI:60240"/>
    </ligand>
</feature>
<feature type="binding site" evidence="1">
    <location>
        <position position="115"/>
    </location>
    <ligand>
        <name>a divalent metal cation</name>
        <dbReference type="ChEBI" id="CHEBI:60240"/>
    </ligand>
</feature>
<proteinExistence type="inferred from homology"/>
<keyword id="KW-0963">Cytoplasm</keyword>
<keyword id="KW-0378">Hydrolase</keyword>
<keyword id="KW-0479">Metal-binding</keyword>
<keyword id="KW-0547">Nucleotide-binding</keyword>